<name>ERA_HALH5</name>
<gene>
    <name evidence="1" type="primary">era</name>
    <name type="synonym">bex</name>
    <name type="ordered locus">BH1367</name>
</gene>
<sequence length="304" mass="34636">MINQKEGFKSGFVSIIGRPNVGKSTLLNHVIGQKIAIMSDKPQTTRNKIQGVYTSEDSQIVFIDTPGIHKPKHKLGDFMMKVAQNTLKEVDLILYVVDGAEAFGPGEEFIIERLKEAKTPVILVINKIDKVHPDDLLSLIETYRHKHEFEEVVPVSALQGNNVPTLLLEITKHLSEGPQYYPSDQVTDHPERFVIAELIREKVLHLTREEIPHSIAVVIEQIKRRQHQDTVYIGATIVVERSSQKGIIIGKQGKMLKEVGQQARADIEALLGSKVFLELWVKVQKDWRNKPQHLRDYGFREDEY</sequence>
<accession>Q9KD52</accession>
<feature type="chain" id="PRO_0000179996" description="GTPase Era">
    <location>
        <begin position="1"/>
        <end position="304"/>
    </location>
</feature>
<feature type="domain" description="Era-type G" evidence="2">
    <location>
        <begin position="9"/>
        <end position="176"/>
    </location>
</feature>
<feature type="domain" description="KH type-2" evidence="1">
    <location>
        <begin position="199"/>
        <end position="285"/>
    </location>
</feature>
<feature type="region of interest" description="G1" evidence="2">
    <location>
        <begin position="17"/>
        <end position="24"/>
    </location>
</feature>
<feature type="region of interest" description="G2" evidence="2">
    <location>
        <begin position="43"/>
        <end position="47"/>
    </location>
</feature>
<feature type="region of interest" description="G3" evidence="2">
    <location>
        <begin position="64"/>
        <end position="67"/>
    </location>
</feature>
<feature type="region of interest" description="G4" evidence="2">
    <location>
        <begin position="126"/>
        <end position="129"/>
    </location>
</feature>
<feature type="region of interest" description="G5" evidence="2">
    <location>
        <begin position="155"/>
        <end position="157"/>
    </location>
</feature>
<feature type="binding site" evidence="1">
    <location>
        <begin position="17"/>
        <end position="24"/>
    </location>
    <ligand>
        <name>GTP</name>
        <dbReference type="ChEBI" id="CHEBI:37565"/>
    </ligand>
</feature>
<feature type="binding site" evidence="1">
    <location>
        <begin position="64"/>
        <end position="68"/>
    </location>
    <ligand>
        <name>GTP</name>
        <dbReference type="ChEBI" id="CHEBI:37565"/>
    </ligand>
</feature>
<feature type="binding site" evidence="1">
    <location>
        <begin position="126"/>
        <end position="129"/>
    </location>
    <ligand>
        <name>GTP</name>
        <dbReference type="ChEBI" id="CHEBI:37565"/>
    </ligand>
</feature>
<proteinExistence type="inferred from homology"/>
<comment type="function">
    <text evidence="1">An essential GTPase that binds both GDP and GTP, with rapid nucleotide exchange. Plays a role in 16S rRNA processing and 30S ribosomal subunit biogenesis and possibly also in cell cycle regulation and energy metabolism.</text>
</comment>
<comment type="subunit">
    <text evidence="1">Monomer.</text>
</comment>
<comment type="subcellular location">
    <subcellularLocation>
        <location>Cytoplasm</location>
    </subcellularLocation>
    <subcellularLocation>
        <location evidence="1">Cell membrane</location>
        <topology evidence="1">Peripheral membrane protein</topology>
    </subcellularLocation>
</comment>
<comment type="similarity">
    <text evidence="1 2">Belongs to the TRAFAC class TrmE-Era-EngA-EngB-Septin-like GTPase superfamily. Era GTPase family.</text>
</comment>
<dbReference type="EMBL" id="BA000004">
    <property type="protein sequence ID" value="BAB05086.1"/>
    <property type="molecule type" value="Genomic_DNA"/>
</dbReference>
<dbReference type="PIR" id="G83820">
    <property type="entry name" value="G83820"/>
</dbReference>
<dbReference type="RefSeq" id="WP_010897532.1">
    <property type="nucleotide sequence ID" value="NC_002570.2"/>
</dbReference>
<dbReference type="SMR" id="Q9KD52"/>
<dbReference type="STRING" id="272558.gene:10727261"/>
<dbReference type="KEGG" id="bha:BH1367"/>
<dbReference type="eggNOG" id="COG1159">
    <property type="taxonomic scope" value="Bacteria"/>
</dbReference>
<dbReference type="HOGENOM" id="CLU_038009_1_0_9"/>
<dbReference type="OrthoDB" id="9805918at2"/>
<dbReference type="Proteomes" id="UP000001258">
    <property type="component" value="Chromosome"/>
</dbReference>
<dbReference type="GO" id="GO:0005829">
    <property type="term" value="C:cytosol"/>
    <property type="evidence" value="ECO:0007669"/>
    <property type="project" value="TreeGrafter"/>
</dbReference>
<dbReference type="GO" id="GO:0005886">
    <property type="term" value="C:plasma membrane"/>
    <property type="evidence" value="ECO:0007669"/>
    <property type="project" value="UniProtKB-SubCell"/>
</dbReference>
<dbReference type="GO" id="GO:0005525">
    <property type="term" value="F:GTP binding"/>
    <property type="evidence" value="ECO:0007669"/>
    <property type="project" value="UniProtKB-UniRule"/>
</dbReference>
<dbReference type="GO" id="GO:0003924">
    <property type="term" value="F:GTPase activity"/>
    <property type="evidence" value="ECO:0007669"/>
    <property type="project" value="UniProtKB-UniRule"/>
</dbReference>
<dbReference type="GO" id="GO:0043024">
    <property type="term" value="F:ribosomal small subunit binding"/>
    <property type="evidence" value="ECO:0007669"/>
    <property type="project" value="TreeGrafter"/>
</dbReference>
<dbReference type="GO" id="GO:0070181">
    <property type="term" value="F:small ribosomal subunit rRNA binding"/>
    <property type="evidence" value="ECO:0007669"/>
    <property type="project" value="UniProtKB-UniRule"/>
</dbReference>
<dbReference type="GO" id="GO:0000028">
    <property type="term" value="P:ribosomal small subunit assembly"/>
    <property type="evidence" value="ECO:0007669"/>
    <property type="project" value="TreeGrafter"/>
</dbReference>
<dbReference type="CDD" id="cd04163">
    <property type="entry name" value="Era"/>
    <property type="match status" value="1"/>
</dbReference>
<dbReference type="CDD" id="cd22534">
    <property type="entry name" value="KH-II_Era"/>
    <property type="match status" value="1"/>
</dbReference>
<dbReference type="FunFam" id="3.30.300.20:FF:000003">
    <property type="entry name" value="GTPase Era"/>
    <property type="match status" value="1"/>
</dbReference>
<dbReference type="FunFam" id="3.40.50.300:FF:000094">
    <property type="entry name" value="GTPase Era"/>
    <property type="match status" value="1"/>
</dbReference>
<dbReference type="Gene3D" id="3.30.300.20">
    <property type="match status" value="1"/>
</dbReference>
<dbReference type="Gene3D" id="3.40.50.300">
    <property type="entry name" value="P-loop containing nucleotide triphosphate hydrolases"/>
    <property type="match status" value="1"/>
</dbReference>
<dbReference type="HAMAP" id="MF_00367">
    <property type="entry name" value="GTPase_Era"/>
    <property type="match status" value="1"/>
</dbReference>
<dbReference type="InterPro" id="IPR030388">
    <property type="entry name" value="G_ERA_dom"/>
</dbReference>
<dbReference type="InterPro" id="IPR006073">
    <property type="entry name" value="GTP-bd"/>
</dbReference>
<dbReference type="InterPro" id="IPR005662">
    <property type="entry name" value="GTPase_Era-like"/>
</dbReference>
<dbReference type="InterPro" id="IPR015946">
    <property type="entry name" value="KH_dom-like_a/b"/>
</dbReference>
<dbReference type="InterPro" id="IPR004044">
    <property type="entry name" value="KH_dom_type_2"/>
</dbReference>
<dbReference type="InterPro" id="IPR009019">
    <property type="entry name" value="KH_sf_prok-type"/>
</dbReference>
<dbReference type="InterPro" id="IPR027417">
    <property type="entry name" value="P-loop_NTPase"/>
</dbReference>
<dbReference type="InterPro" id="IPR005225">
    <property type="entry name" value="Small_GTP-bd"/>
</dbReference>
<dbReference type="NCBIfam" id="TIGR00436">
    <property type="entry name" value="era"/>
    <property type="match status" value="1"/>
</dbReference>
<dbReference type="NCBIfam" id="NF000908">
    <property type="entry name" value="PRK00089.1"/>
    <property type="match status" value="1"/>
</dbReference>
<dbReference type="NCBIfam" id="TIGR00231">
    <property type="entry name" value="small_GTP"/>
    <property type="match status" value="1"/>
</dbReference>
<dbReference type="PANTHER" id="PTHR42698">
    <property type="entry name" value="GTPASE ERA"/>
    <property type="match status" value="1"/>
</dbReference>
<dbReference type="PANTHER" id="PTHR42698:SF1">
    <property type="entry name" value="GTPASE ERA, MITOCHONDRIAL"/>
    <property type="match status" value="1"/>
</dbReference>
<dbReference type="Pfam" id="PF07650">
    <property type="entry name" value="KH_2"/>
    <property type="match status" value="1"/>
</dbReference>
<dbReference type="Pfam" id="PF01926">
    <property type="entry name" value="MMR_HSR1"/>
    <property type="match status" value="1"/>
</dbReference>
<dbReference type="PRINTS" id="PR00326">
    <property type="entry name" value="GTP1OBG"/>
</dbReference>
<dbReference type="SUPFAM" id="SSF52540">
    <property type="entry name" value="P-loop containing nucleoside triphosphate hydrolases"/>
    <property type="match status" value="1"/>
</dbReference>
<dbReference type="SUPFAM" id="SSF54814">
    <property type="entry name" value="Prokaryotic type KH domain (KH-domain type II)"/>
    <property type="match status" value="1"/>
</dbReference>
<dbReference type="PROSITE" id="PS51713">
    <property type="entry name" value="G_ERA"/>
    <property type="match status" value="1"/>
</dbReference>
<dbReference type="PROSITE" id="PS50823">
    <property type="entry name" value="KH_TYPE_2"/>
    <property type="match status" value="1"/>
</dbReference>
<keyword id="KW-1003">Cell membrane</keyword>
<keyword id="KW-0963">Cytoplasm</keyword>
<keyword id="KW-0342">GTP-binding</keyword>
<keyword id="KW-0472">Membrane</keyword>
<keyword id="KW-0547">Nucleotide-binding</keyword>
<keyword id="KW-1185">Reference proteome</keyword>
<keyword id="KW-0690">Ribosome biogenesis</keyword>
<keyword id="KW-0694">RNA-binding</keyword>
<keyword id="KW-0699">rRNA-binding</keyword>
<organism>
    <name type="scientific">Halalkalibacterium halodurans (strain ATCC BAA-125 / DSM 18197 / FERM 7344 / JCM 9153 / C-125)</name>
    <name type="common">Bacillus halodurans</name>
    <dbReference type="NCBI Taxonomy" id="272558"/>
    <lineage>
        <taxon>Bacteria</taxon>
        <taxon>Bacillati</taxon>
        <taxon>Bacillota</taxon>
        <taxon>Bacilli</taxon>
        <taxon>Bacillales</taxon>
        <taxon>Bacillaceae</taxon>
        <taxon>Halalkalibacterium (ex Joshi et al. 2022)</taxon>
    </lineage>
</organism>
<protein>
    <recommendedName>
        <fullName evidence="1">GTPase Era</fullName>
    </recommendedName>
</protein>
<reference key="1">
    <citation type="journal article" date="2000" name="Nucleic Acids Res.">
        <title>Complete genome sequence of the alkaliphilic bacterium Bacillus halodurans and genomic sequence comparison with Bacillus subtilis.</title>
        <authorList>
            <person name="Takami H."/>
            <person name="Nakasone K."/>
            <person name="Takaki Y."/>
            <person name="Maeno G."/>
            <person name="Sasaki R."/>
            <person name="Masui N."/>
            <person name="Fuji F."/>
            <person name="Hirama C."/>
            <person name="Nakamura Y."/>
            <person name="Ogasawara N."/>
            <person name="Kuhara S."/>
            <person name="Horikoshi K."/>
        </authorList>
    </citation>
    <scope>NUCLEOTIDE SEQUENCE [LARGE SCALE GENOMIC DNA]</scope>
    <source>
        <strain>ATCC BAA-125 / DSM 18197 / FERM 7344 / JCM 9153 / C-125</strain>
    </source>
</reference>
<evidence type="ECO:0000255" key="1">
    <source>
        <dbReference type="HAMAP-Rule" id="MF_00367"/>
    </source>
</evidence>
<evidence type="ECO:0000255" key="2">
    <source>
        <dbReference type="PROSITE-ProRule" id="PRU01050"/>
    </source>
</evidence>